<accession>Q5WZL0</accession>
<keyword id="KW-0687">Ribonucleoprotein</keyword>
<keyword id="KW-0689">Ribosomal protein</keyword>
<keyword id="KW-0694">RNA-binding</keyword>
<keyword id="KW-0699">rRNA-binding</keyword>
<name>RL23_LEGPL</name>
<feature type="chain" id="PRO_0000272764" description="Large ribosomal subunit protein uL23">
    <location>
        <begin position="1"/>
        <end position="98"/>
    </location>
</feature>
<gene>
    <name evidence="1" type="primary">rplW</name>
    <name type="ordered locus">lpl0371</name>
</gene>
<protein>
    <recommendedName>
        <fullName evidence="1">Large ribosomal subunit protein uL23</fullName>
    </recommendedName>
    <alternativeName>
        <fullName evidence="2">50S ribosomal protein L23</fullName>
    </alternativeName>
</protein>
<evidence type="ECO:0000255" key="1">
    <source>
        <dbReference type="HAMAP-Rule" id="MF_01369"/>
    </source>
</evidence>
<evidence type="ECO:0000305" key="2"/>
<proteinExistence type="inferred from homology"/>
<organism>
    <name type="scientific">Legionella pneumophila (strain Lens)</name>
    <dbReference type="NCBI Taxonomy" id="297245"/>
    <lineage>
        <taxon>Bacteria</taxon>
        <taxon>Pseudomonadati</taxon>
        <taxon>Pseudomonadota</taxon>
        <taxon>Gammaproteobacteria</taxon>
        <taxon>Legionellales</taxon>
        <taxon>Legionellaceae</taxon>
        <taxon>Legionella</taxon>
    </lineage>
</organism>
<sequence length="98" mass="11259">MNAERLMMVLREPHTSEKATVMADKFKQFTFKVLKNATKTEIKLAVEHIFNVKVKSVSVVNVKGKSKRFKQTSGKRSDWKKAFVSLHADQDIDFTVTE</sequence>
<dbReference type="EMBL" id="CR628337">
    <property type="protein sequence ID" value="CAH14602.1"/>
    <property type="molecule type" value="Genomic_DNA"/>
</dbReference>
<dbReference type="RefSeq" id="WP_011213009.1">
    <property type="nucleotide sequence ID" value="NC_006369.1"/>
</dbReference>
<dbReference type="SMR" id="Q5WZL0"/>
<dbReference type="GeneID" id="57034334"/>
<dbReference type="KEGG" id="lpf:lpl0371"/>
<dbReference type="LegioList" id="lpl0371"/>
<dbReference type="HOGENOM" id="CLU_037562_3_1_6"/>
<dbReference type="Proteomes" id="UP000002517">
    <property type="component" value="Chromosome"/>
</dbReference>
<dbReference type="GO" id="GO:1990904">
    <property type="term" value="C:ribonucleoprotein complex"/>
    <property type="evidence" value="ECO:0007669"/>
    <property type="project" value="UniProtKB-KW"/>
</dbReference>
<dbReference type="GO" id="GO:0005840">
    <property type="term" value="C:ribosome"/>
    <property type="evidence" value="ECO:0007669"/>
    <property type="project" value="UniProtKB-KW"/>
</dbReference>
<dbReference type="GO" id="GO:0019843">
    <property type="term" value="F:rRNA binding"/>
    <property type="evidence" value="ECO:0007669"/>
    <property type="project" value="UniProtKB-UniRule"/>
</dbReference>
<dbReference type="GO" id="GO:0003735">
    <property type="term" value="F:structural constituent of ribosome"/>
    <property type="evidence" value="ECO:0007669"/>
    <property type="project" value="InterPro"/>
</dbReference>
<dbReference type="GO" id="GO:0006412">
    <property type="term" value="P:translation"/>
    <property type="evidence" value="ECO:0007669"/>
    <property type="project" value="UniProtKB-UniRule"/>
</dbReference>
<dbReference type="FunFam" id="3.30.70.330:FF:000001">
    <property type="entry name" value="50S ribosomal protein L23"/>
    <property type="match status" value="1"/>
</dbReference>
<dbReference type="Gene3D" id="3.30.70.330">
    <property type="match status" value="1"/>
</dbReference>
<dbReference type="HAMAP" id="MF_01369_B">
    <property type="entry name" value="Ribosomal_uL23_B"/>
    <property type="match status" value="1"/>
</dbReference>
<dbReference type="InterPro" id="IPR012677">
    <property type="entry name" value="Nucleotide-bd_a/b_plait_sf"/>
</dbReference>
<dbReference type="InterPro" id="IPR013025">
    <property type="entry name" value="Ribosomal_uL23-like"/>
</dbReference>
<dbReference type="InterPro" id="IPR012678">
    <property type="entry name" value="Ribosomal_uL23/eL15/eS24_sf"/>
</dbReference>
<dbReference type="NCBIfam" id="NF004359">
    <property type="entry name" value="PRK05738.1-3"/>
    <property type="match status" value="1"/>
</dbReference>
<dbReference type="NCBIfam" id="NF004363">
    <property type="entry name" value="PRK05738.2-4"/>
    <property type="match status" value="1"/>
</dbReference>
<dbReference type="PANTHER" id="PTHR11620">
    <property type="entry name" value="60S RIBOSOMAL PROTEIN L23A"/>
    <property type="match status" value="1"/>
</dbReference>
<dbReference type="Pfam" id="PF00276">
    <property type="entry name" value="Ribosomal_L23"/>
    <property type="match status" value="1"/>
</dbReference>
<dbReference type="SUPFAM" id="SSF54189">
    <property type="entry name" value="Ribosomal proteins S24e, L23 and L15e"/>
    <property type="match status" value="1"/>
</dbReference>
<reference key="1">
    <citation type="journal article" date="2004" name="Nat. Genet.">
        <title>Evidence in the Legionella pneumophila genome for exploitation of host cell functions and high genome plasticity.</title>
        <authorList>
            <person name="Cazalet C."/>
            <person name="Rusniok C."/>
            <person name="Brueggemann H."/>
            <person name="Zidane N."/>
            <person name="Magnier A."/>
            <person name="Ma L."/>
            <person name="Tichit M."/>
            <person name="Jarraud S."/>
            <person name="Bouchier C."/>
            <person name="Vandenesch F."/>
            <person name="Kunst F."/>
            <person name="Etienne J."/>
            <person name="Glaser P."/>
            <person name="Buchrieser C."/>
        </authorList>
    </citation>
    <scope>NUCLEOTIDE SEQUENCE [LARGE SCALE GENOMIC DNA]</scope>
    <source>
        <strain>Lens</strain>
    </source>
</reference>
<comment type="function">
    <text evidence="1">One of the early assembly proteins it binds 23S rRNA. One of the proteins that surrounds the polypeptide exit tunnel on the outside of the ribosome. Forms the main docking site for trigger factor binding to the ribosome.</text>
</comment>
<comment type="subunit">
    <text evidence="1">Part of the 50S ribosomal subunit. Contacts protein L29, and trigger factor when it is bound to the ribosome.</text>
</comment>
<comment type="similarity">
    <text evidence="1">Belongs to the universal ribosomal protein uL23 family.</text>
</comment>